<reference key="1">
    <citation type="journal article" date="1992" name="Yeast">
        <title>Molecular cloning and physical analysis of an 8.2 kb segment of chromosome XI of Saccharomyces cerevisiae reveals five tightly linked genes.</title>
        <authorList>
            <person name="Abraham P.R."/>
            <person name="Mulder A."/>
            <person name="Van'T Riet J."/>
            <person name="Planta R.J."/>
            <person name="Raue H.A."/>
        </authorList>
    </citation>
    <scope>NUCLEOTIDE SEQUENCE [GENOMIC DNA]</scope>
</reference>
<reference key="2">
    <citation type="journal article" date="1994" name="Nature">
        <title>Complete DNA sequence of yeast chromosome XI.</title>
        <authorList>
            <person name="Dujon B."/>
            <person name="Alexandraki D."/>
            <person name="Andre B."/>
            <person name="Ansorge W."/>
            <person name="Baladron V."/>
            <person name="Ballesta J.P.G."/>
            <person name="Banrevi A."/>
            <person name="Bolle P.-A."/>
            <person name="Bolotin-Fukuhara M."/>
            <person name="Bossier P."/>
            <person name="Bou G."/>
            <person name="Boyer J."/>
            <person name="Buitrago M.J."/>
            <person name="Cheret G."/>
            <person name="Colleaux L."/>
            <person name="Daignan-Fornier B."/>
            <person name="del Rey F."/>
            <person name="Dion C."/>
            <person name="Domdey H."/>
            <person name="Duesterhoeft A."/>
            <person name="Duesterhus S."/>
            <person name="Entian K.-D."/>
            <person name="Erfle H."/>
            <person name="Esteban P.F."/>
            <person name="Feldmann H."/>
            <person name="Fernandes L."/>
            <person name="Fobo G.M."/>
            <person name="Fritz C."/>
            <person name="Fukuhara H."/>
            <person name="Gabel C."/>
            <person name="Gaillon L."/>
            <person name="Garcia-Cantalejo J.M."/>
            <person name="Garcia-Ramirez J.J."/>
            <person name="Gent M.E."/>
            <person name="Ghazvini M."/>
            <person name="Goffeau A."/>
            <person name="Gonzalez A."/>
            <person name="Grothues D."/>
            <person name="Guerreiro P."/>
            <person name="Hegemann J.H."/>
            <person name="Hewitt N."/>
            <person name="Hilger F."/>
            <person name="Hollenberg C.P."/>
            <person name="Horaitis O."/>
            <person name="Indge K.J."/>
            <person name="Jacquier A."/>
            <person name="James C.M."/>
            <person name="Jauniaux J.-C."/>
            <person name="Jimenez A."/>
            <person name="Keuchel H."/>
            <person name="Kirchrath L."/>
            <person name="Kleine K."/>
            <person name="Koetter P."/>
            <person name="Legrain P."/>
            <person name="Liebl S."/>
            <person name="Louis E.J."/>
            <person name="Maia e Silva A."/>
            <person name="Marck C."/>
            <person name="Monnier A.-L."/>
            <person name="Moestl D."/>
            <person name="Mueller S."/>
            <person name="Obermaier B."/>
            <person name="Oliver S.G."/>
            <person name="Pallier C."/>
            <person name="Pascolo S."/>
            <person name="Pfeiffer F."/>
            <person name="Philippsen P."/>
            <person name="Planta R.J."/>
            <person name="Pohl F.M."/>
            <person name="Pohl T.M."/>
            <person name="Poehlmann R."/>
            <person name="Portetelle D."/>
            <person name="Purnelle B."/>
            <person name="Puzos V."/>
            <person name="Ramezani Rad M."/>
            <person name="Rasmussen S.W."/>
            <person name="Remacha M.A."/>
            <person name="Revuelta J.L."/>
            <person name="Richard G.-F."/>
            <person name="Rieger M."/>
            <person name="Rodrigues-Pousada C."/>
            <person name="Rose M."/>
            <person name="Rupp T."/>
            <person name="Santos M.A."/>
            <person name="Schwager C."/>
            <person name="Sensen C."/>
            <person name="Skala J."/>
            <person name="Soares H."/>
            <person name="Sor F."/>
            <person name="Stegemann J."/>
            <person name="Tettelin H."/>
            <person name="Thierry A."/>
            <person name="Tzermia M."/>
            <person name="Urrestarazu L.A."/>
            <person name="van Dyck L."/>
            <person name="van Vliet-Reedijk J.C."/>
            <person name="Valens M."/>
            <person name="Vandenbol M."/>
            <person name="Vilela C."/>
            <person name="Vissers S."/>
            <person name="von Wettstein D."/>
            <person name="Voss H."/>
            <person name="Wiemann S."/>
            <person name="Xu G."/>
            <person name="Zimmermann J."/>
            <person name="Haasemann M."/>
            <person name="Becker I."/>
            <person name="Mewes H.-W."/>
        </authorList>
    </citation>
    <scope>NUCLEOTIDE SEQUENCE [LARGE SCALE GENOMIC DNA]</scope>
    <source>
        <strain>ATCC 204508 / S288c</strain>
    </source>
</reference>
<reference key="3">
    <citation type="journal article" date="2014" name="G3 (Bethesda)">
        <title>The reference genome sequence of Saccharomyces cerevisiae: Then and now.</title>
        <authorList>
            <person name="Engel S.R."/>
            <person name="Dietrich F.S."/>
            <person name="Fisk D.G."/>
            <person name="Binkley G."/>
            <person name="Balakrishnan R."/>
            <person name="Costanzo M.C."/>
            <person name="Dwight S.S."/>
            <person name="Hitz B.C."/>
            <person name="Karra K."/>
            <person name="Nash R.S."/>
            <person name="Weng S."/>
            <person name="Wong E.D."/>
            <person name="Lloyd P."/>
            <person name="Skrzypek M.S."/>
            <person name="Miyasato S.R."/>
            <person name="Simison M."/>
            <person name="Cherry J.M."/>
        </authorList>
    </citation>
    <scope>GENOME REANNOTATION</scope>
    <source>
        <strain>ATCC 204508 / S288c</strain>
    </source>
</reference>
<reference key="4">
    <citation type="journal article" date="1999" name="J. Bacteriol.">
        <title>Identification and characterization of major lipid particle proteins of the yeast Saccharomyces cerevisiae.</title>
        <authorList>
            <person name="Athenstaedt K."/>
            <person name="Zweytick D."/>
            <person name="Jandrositz A."/>
            <person name="Kohlwein S.D."/>
            <person name="Daum G."/>
        </authorList>
    </citation>
    <scope>IDENTIFICATION BY MASS SPECTROMETRY</scope>
    <scope>FUNCTION</scope>
</reference>
<reference key="5">
    <citation type="journal article" date="2003" name="Nature">
        <title>Global analysis of protein localization in budding yeast.</title>
        <authorList>
            <person name="Huh W.-K."/>
            <person name="Falvo J.V."/>
            <person name="Gerke L.C."/>
            <person name="Carroll A.S."/>
            <person name="Howson R.W."/>
            <person name="Weissman J.S."/>
            <person name="O'Shea E.K."/>
        </authorList>
    </citation>
    <scope>SUBCELLULAR LOCATION [LARGE SCALE ANALYSIS]</scope>
</reference>
<reference key="6">
    <citation type="journal article" date="2003" name="Nature">
        <title>Global analysis of protein expression in yeast.</title>
        <authorList>
            <person name="Ghaemmaghami S."/>
            <person name="Huh W.-K."/>
            <person name="Bower K."/>
            <person name="Howson R.W."/>
            <person name="Belle A."/>
            <person name="Dephoure N."/>
            <person name="O'Shea E.K."/>
            <person name="Weissman J.S."/>
        </authorList>
    </citation>
    <scope>LEVEL OF PROTEIN EXPRESSION [LARGE SCALE ANALYSIS]</scope>
</reference>
<reference key="7">
    <citation type="journal article" date="2004" name="Biochem. J.">
        <title>Lipid dynamics in yeast under haem-induced unsaturated fatty acid and/or sterol depletion.</title>
        <authorList>
            <person name="Ferreira T."/>
            <person name="Regnacq M."/>
            <person name="Alimardani P."/>
            <person name="Moreau-Vauzelle C."/>
            <person name="Berges T."/>
        </authorList>
    </citation>
    <scope>FUNCTION</scope>
</reference>
<reference key="8">
    <citation type="journal article" date="2005" name="Biochim. Biophys. Acta">
        <title>The lipid droplet enzyme Tgl1p hydrolyzes both steryl esters and triglycerides in the yeast, Saccharomyces cerevisiae.</title>
        <authorList>
            <person name="Jandrositz A."/>
            <person name="Petschnigg J."/>
            <person name="Zimmermann R."/>
            <person name="Natter K."/>
            <person name="Scholze H."/>
            <person name="Hermetter A."/>
            <person name="Kohlwein S.D."/>
            <person name="Leber R."/>
        </authorList>
    </citation>
    <scope>FUNCTION</scope>
    <scope>CATALYTIC ACTIVITY</scope>
    <scope>BIOPHYSICOCHEMICAL PROPERTIES</scope>
    <scope>SUBCELLULAR LOCATION</scope>
</reference>
<reference key="9">
    <citation type="journal article" date="2005" name="Mol. Cell. Biol.">
        <title>The Saccharomyces cerevisiae YLL012/YEH1, YLR020/YEH2, and TGL1 genes encode a novel family of membrane-anchored lipases that are required for steryl ester hydrolysis.</title>
        <authorList>
            <person name="Koeffel R."/>
            <person name="Tiwari R."/>
            <person name="Falquet L."/>
            <person name="Schneiter R."/>
        </authorList>
    </citation>
    <scope>FUNCTION</scope>
    <scope>CATALYTIC ACTIVITY</scope>
    <scope>SUBCELLULAR LOCATION</scope>
    <scope>LACK OF GLYCOSYLATION</scope>
</reference>
<reference key="10">
    <citation type="journal article" date="2007" name="J. Proteome Res.">
        <title>Large-scale phosphorylation analysis of alpha-factor-arrested Saccharomyces cerevisiae.</title>
        <authorList>
            <person name="Li X."/>
            <person name="Gerber S.A."/>
            <person name="Rudner A.D."/>
            <person name="Beausoleil S.A."/>
            <person name="Haas W."/>
            <person name="Villen J."/>
            <person name="Elias J.E."/>
            <person name="Gygi S.P."/>
        </authorList>
    </citation>
    <scope>IDENTIFICATION BY MASS SPECTROMETRY [LARGE SCALE ANALYSIS]</scope>
    <source>
        <strain>ADR376</strain>
    </source>
</reference>
<reference key="11">
    <citation type="journal article" date="2007" name="Proc. Natl. Acad. Sci. U.S.A.">
        <title>Analysis of phosphorylation sites on proteins from Saccharomyces cerevisiae by electron transfer dissociation (ETD) mass spectrometry.</title>
        <authorList>
            <person name="Chi A."/>
            <person name="Huttenhower C."/>
            <person name="Geer L.Y."/>
            <person name="Coon J.J."/>
            <person name="Syka J.E.P."/>
            <person name="Bai D.L."/>
            <person name="Shabanowitz J."/>
            <person name="Burke D.J."/>
            <person name="Troyanskaya O.G."/>
            <person name="Hunt D.F."/>
        </authorList>
    </citation>
    <scope>PHOSPHORYLATION [LARGE SCALE ANALYSIS] AT SER-521</scope>
    <scope>IDENTIFICATION BY MASS SPECTROMETRY [LARGE SCALE ANALYSIS]</scope>
</reference>
<reference key="12">
    <citation type="journal article" date="2008" name="Mol. Cell. Proteomics">
        <title>A multidimensional chromatography technology for in-depth phosphoproteome analysis.</title>
        <authorList>
            <person name="Albuquerque C.P."/>
            <person name="Smolka M.B."/>
            <person name="Payne S.H."/>
            <person name="Bafna V."/>
            <person name="Eng J."/>
            <person name="Zhou H."/>
        </authorList>
    </citation>
    <scope>IDENTIFICATION BY MASS SPECTROMETRY [LARGE SCALE ANALYSIS]</scope>
</reference>
<reference key="13">
    <citation type="journal article" date="2009" name="Biochim. Biophys. Acta">
        <title>Mobilization of steryl esters from lipid particles of the yeast Saccharomyces cerevisiae.</title>
        <authorList>
            <person name="Wagner A."/>
            <person name="Grillitsch K."/>
            <person name="Leitner E."/>
            <person name="Daum G."/>
        </authorList>
    </citation>
    <scope>FUNCTION</scope>
    <scope>SUBSTRATE SPECIFICITY</scope>
</reference>
<reference key="14">
    <citation type="journal article" date="2009" name="Science">
        <title>Global analysis of Cdk1 substrate phosphorylation sites provides insights into evolution.</title>
        <authorList>
            <person name="Holt L.J."/>
            <person name="Tuch B.B."/>
            <person name="Villen J."/>
            <person name="Johnson A.D."/>
            <person name="Gygi S.P."/>
            <person name="Morgan D.O."/>
        </authorList>
    </citation>
    <scope>PHOSPHORYLATION [LARGE SCALE ANALYSIS] AT SER-462; SER-466; SER-538 AND THR-539</scope>
    <scope>IDENTIFICATION BY MASS SPECTROMETRY [LARGE SCALE ANALYSIS]</scope>
</reference>
<reference key="15">
    <citation type="journal article" date="2011" name="Biochim. Biophys. Acta">
        <title>Lipid particles/droplets of the yeast Saccharomyces cerevisiae revisited: lipidome meets proteome.</title>
        <authorList>
            <person name="Grillitsch K."/>
            <person name="Connerth M."/>
            <person name="Kofeler H."/>
            <person name="Arrey T.N."/>
            <person name="Rietschel B."/>
            <person name="Wagner B."/>
            <person name="Karas M."/>
            <person name="Daum G."/>
        </authorList>
    </citation>
    <scope>SUBCELLULAR LOCATION</scope>
</reference>
<reference key="16">
    <citation type="journal article" date="2011" name="Front. Biol.">
        <title>Triacylglycerol lipases of the yeast.</title>
        <authorList>
            <person name="Grillitsch K."/>
            <person name="Daum G."/>
        </authorList>
    </citation>
    <scope>LIPASE MOTIF</scope>
</reference>
<reference key="17">
    <citation type="journal article" date="2012" name="Proteomics">
        <title>Sites of ubiquitin attachment in Saccharomyces cerevisiae.</title>
        <authorList>
            <person name="Starita L.M."/>
            <person name="Lo R.S."/>
            <person name="Eng J.K."/>
            <person name="von Haller P.D."/>
            <person name="Fields S."/>
        </authorList>
    </citation>
    <scope>UBIQUITINATION [LARGE SCALE ANALYSIS] AT LYS-246</scope>
    <scope>IDENTIFICATION BY MASS SPECTROMETRY [LARGE SCALE ANALYSIS]</scope>
</reference>
<reference key="18">
    <citation type="journal article" date="2013" name="PLoS ONE">
        <title>N-terminal acetylation by NatC is not a general determinant for substrate subcellular localization in Saccharomyces cerevisiae.</title>
        <authorList>
            <person name="Aksnes H."/>
            <person name="Osberg C."/>
            <person name="Arnesen T."/>
        </authorList>
    </citation>
    <scope>ACETYLATION AT MET-1</scope>
    <scope>SUBCELLULAR LOCATION</scope>
</reference>
<reference key="19">
    <citation type="journal article" date="2014" name="J. Lipid Res.">
        <title>High-confidence proteomic analysis of yeast lipid droplets identifies additional droplet proteins and reveals connections to dolichol synthesis and sterol acetylation.</title>
        <authorList>
            <person name="Currie E."/>
            <person name="Guo X."/>
            <person name="Christiano R."/>
            <person name="Chitraju C."/>
            <person name="Kory N."/>
            <person name="Harrison K."/>
            <person name="Haas J."/>
            <person name="Walther T.C."/>
            <person name="Farese R.V. Jr."/>
        </authorList>
    </citation>
    <scope>SUBCELLULAR LOCATION</scope>
</reference>
<reference key="20">
    <citation type="journal article" date="2017" name="Biochim. Biophys. Acta">
        <title>The impact of nonpolar lipids on the regulation of the steryl ester hydrolases Tgl1p and Yeh1p in the yeast Saccharomyces cerevisiae.</title>
        <authorList>
            <person name="Klein I."/>
            <person name="Korber M."/>
            <person name="Athenstaedt K."/>
            <person name="Daum G."/>
        </authorList>
    </citation>
    <scope>FUNCTION</scope>
    <scope>CATALYTIC ACTIVITY</scope>
    <scope>SUBCELLULAR LOCATION</scope>
</reference>
<dbReference type="EC" id="3.1.1.13" evidence="7"/>
<dbReference type="EMBL" id="Z25464">
    <property type="protein sequence ID" value="CAA80958.1"/>
    <property type="molecule type" value="Genomic_DNA"/>
</dbReference>
<dbReference type="EMBL" id="Z28140">
    <property type="protein sequence ID" value="CAA81981.1"/>
    <property type="molecule type" value="Genomic_DNA"/>
</dbReference>
<dbReference type="EMBL" id="BK006944">
    <property type="protein sequence ID" value="DAA09022.1"/>
    <property type="molecule type" value="Genomic_DNA"/>
</dbReference>
<dbReference type="PIR" id="S37969">
    <property type="entry name" value="S37969"/>
</dbReference>
<dbReference type="RefSeq" id="NP_012782.1">
    <property type="nucleotide sequence ID" value="NM_001179706.1"/>
</dbReference>
<dbReference type="SMR" id="P34163"/>
<dbReference type="BioGRID" id="33996">
    <property type="interactions" value="83"/>
</dbReference>
<dbReference type="DIP" id="DIP-6306N"/>
<dbReference type="FunCoup" id="P34163">
    <property type="interactions" value="1737"/>
</dbReference>
<dbReference type="IntAct" id="P34163">
    <property type="interactions" value="17"/>
</dbReference>
<dbReference type="MINT" id="P34163"/>
<dbReference type="STRING" id="4932.YKL140W"/>
<dbReference type="ESTHER" id="yeast-tgl1">
    <property type="family name" value="Acidic_Lipase"/>
</dbReference>
<dbReference type="iPTMnet" id="P34163"/>
<dbReference type="PaxDb" id="4932-YKL140W"/>
<dbReference type="PeptideAtlas" id="P34163"/>
<dbReference type="TopDownProteomics" id="P34163"/>
<dbReference type="EnsemblFungi" id="YKL140W_mRNA">
    <property type="protein sequence ID" value="YKL140W"/>
    <property type="gene ID" value="YKL140W"/>
</dbReference>
<dbReference type="GeneID" id="853717"/>
<dbReference type="KEGG" id="sce:YKL140W"/>
<dbReference type="AGR" id="SGD:S000001623"/>
<dbReference type="SGD" id="S000001623">
    <property type="gene designation" value="TGL1"/>
</dbReference>
<dbReference type="VEuPathDB" id="FungiDB:YKL140W"/>
<dbReference type="eggNOG" id="KOG2624">
    <property type="taxonomic scope" value="Eukaryota"/>
</dbReference>
<dbReference type="HOGENOM" id="CLU_010974_5_0_1"/>
<dbReference type="InParanoid" id="P34163"/>
<dbReference type="OMA" id="WRMYNEI"/>
<dbReference type="OrthoDB" id="9974421at2759"/>
<dbReference type="BioCyc" id="MetaCyc:YKL140W-MONOMER"/>
<dbReference type="BioCyc" id="YEAST:YKL140W-MONOMER"/>
<dbReference type="BRENDA" id="3.1.1.13">
    <property type="organism ID" value="984"/>
</dbReference>
<dbReference type="Reactome" id="R-SCE-192456">
    <property type="pathway name" value="Digestion of dietary lipid"/>
</dbReference>
<dbReference type="Reactome" id="R-SCE-6809371">
    <property type="pathway name" value="Formation of the cornified envelope"/>
</dbReference>
<dbReference type="BioGRID-ORCS" id="853717">
    <property type="hits" value="0 hits in 10 CRISPR screens"/>
</dbReference>
<dbReference type="PRO" id="PR:P34163"/>
<dbReference type="Proteomes" id="UP000002311">
    <property type="component" value="Chromosome XI"/>
</dbReference>
<dbReference type="RNAct" id="P34163">
    <property type="molecule type" value="protein"/>
</dbReference>
<dbReference type="GO" id="GO:0005811">
    <property type="term" value="C:lipid droplet"/>
    <property type="evidence" value="ECO:0000314"/>
    <property type="project" value="SGD"/>
</dbReference>
<dbReference type="GO" id="GO:0016020">
    <property type="term" value="C:membrane"/>
    <property type="evidence" value="ECO:0000314"/>
    <property type="project" value="SGD"/>
</dbReference>
<dbReference type="GO" id="GO:0004771">
    <property type="term" value="F:sterol ester esterase activity"/>
    <property type="evidence" value="ECO:0000314"/>
    <property type="project" value="SGD"/>
</dbReference>
<dbReference type="GO" id="GO:0016042">
    <property type="term" value="P:lipid catabolic process"/>
    <property type="evidence" value="ECO:0007669"/>
    <property type="project" value="UniProtKB-KW"/>
</dbReference>
<dbReference type="GO" id="GO:0006629">
    <property type="term" value="P:lipid metabolic process"/>
    <property type="evidence" value="ECO:0000315"/>
    <property type="project" value="SGD"/>
</dbReference>
<dbReference type="GO" id="GO:0016125">
    <property type="term" value="P:sterol metabolic process"/>
    <property type="evidence" value="ECO:0000315"/>
    <property type="project" value="SGD"/>
</dbReference>
<dbReference type="FunFam" id="3.40.50.1820:FF:000095">
    <property type="entry name" value="Triglyceride lipase-cholesterol esterase"/>
    <property type="match status" value="1"/>
</dbReference>
<dbReference type="Gene3D" id="3.40.50.1820">
    <property type="entry name" value="alpha/beta hydrolase"/>
    <property type="match status" value="1"/>
</dbReference>
<dbReference type="InterPro" id="IPR000073">
    <property type="entry name" value="AB_hydrolase_1"/>
</dbReference>
<dbReference type="InterPro" id="IPR029058">
    <property type="entry name" value="AB_hydrolase_fold"/>
</dbReference>
<dbReference type="PANTHER" id="PTHR11005">
    <property type="entry name" value="LYSOSOMAL ACID LIPASE-RELATED"/>
    <property type="match status" value="1"/>
</dbReference>
<dbReference type="Pfam" id="PF00561">
    <property type="entry name" value="Abhydrolase_1"/>
    <property type="match status" value="1"/>
</dbReference>
<dbReference type="SUPFAM" id="SSF53474">
    <property type="entry name" value="alpha/beta-Hydrolases"/>
    <property type="match status" value="1"/>
</dbReference>
<keyword id="KW-0007">Acetylation</keyword>
<keyword id="KW-0378">Hydrolase</keyword>
<keyword id="KW-1017">Isopeptide bond</keyword>
<keyword id="KW-0442">Lipid degradation</keyword>
<keyword id="KW-0551">Lipid droplet</keyword>
<keyword id="KW-0443">Lipid metabolism</keyword>
<keyword id="KW-0472">Membrane</keyword>
<keyword id="KW-0597">Phosphoprotein</keyword>
<keyword id="KW-1185">Reference proteome</keyword>
<keyword id="KW-0812">Transmembrane</keyword>
<keyword id="KW-1133">Transmembrane helix</keyword>
<keyword id="KW-0832">Ubl conjugation</keyword>
<organism>
    <name type="scientific">Saccharomyces cerevisiae (strain ATCC 204508 / S288c)</name>
    <name type="common">Baker's yeast</name>
    <dbReference type="NCBI Taxonomy" id="559292"/>
    <lineage>
        <taxon>Eukaryota</taxon>
        <taxon>Fungi</taxon>
        <taxon>Dikarya</taxon>
        <taxon>Ascomycota</taxon>
        <taxon>Saccharomycotina</taxon>
        <taxon>Saccharomycetes</taxon>
        <taxon>Saccharomycetales</taxon>
        <taxon>Saccharomycetaceae</taxon>
        <taxon>Saccharomyces</taxon>
    </lineage>
</organism>
<gene>
    <name type="primary">TGL1</name>
    <name type="ordered locus">YKL140W</name>
    <name type="ORF">YKL5</name>
</gene>
<name>TGL1_YEAST</name>
<comment type="function">
    <text evidence="4 6 7 8 9 13">Mediates the hydrolysis of steryl esters (SE) (PubMed:10515935, PubMed:14640980, PubMed:15713625). Preferentially hydrolyzes ergosteryl and zymosteryl esters (PubMed:19111628). Required for mobilization of SEs from lipid particles/droplets, thereby playing a central role in lipid metabolism and sterol homeostasis. Sterol intermediates stored in SE and set free by SE hydrolases are recycled to the sterol biosynthetic pathway and converted to the final product, ergosterol, in the endoplasmic reticulum. Also has weak lipase activity toward triglycerides at neutral pH, however, the physiological relevance of this activity is unclear (PubMed:15922657, PubMed:19111628, PubMed:28866104).</text>
</comment>
<comment type="catalytic activity">
    <reaction evidence="7 8 13">
        <text>a sterol ester + H2O = a sterol + a fatty acid + H(+)</text>
        <dbReference type="Rhea" id="RHEA:10100"/>
        <dbReference type="ChEBI" id="CHEBI:15377"/>
        <dbReference type="ChEBI" id="CHEBI:15378"/>
        <dbReference type="ChEBI" id="CHEBI:15889"/>
        <dbReference type="ChEBI" id="CHEBI:28868"/>
        <dbReference type="ChEBI" id="CHEBI:35915"/>
        <dbReference type="EC" id="3.1.1.13"/>
    </reaction>
</comment>
<comment type="biophysicochemical properties">
    <phDependence>
        <text evidence="8">Optimum pH is 7.4.</text>
    </phDependence>
</comment>
<comment type="subcellular location">
    <subcellularLocation>
        <location evidence="4 7 8 10 11 12 13">Lipid droplet</location>
    </subcellularLocation>
    <subcellularLocation>
        <location evidence="2">Membrane</location>
        <topology evidence="2">Single-pass membrane protein</topology>
    </subcellularLocation>
    <text evidence="13">Partially retained in the endoplasmic reticulum in cells lacking triacylglycerols and consequently lipid droplets.</text>
</comment>
<comment type="PTM">
    <text evidence="7">Not N-glycosylated.</text>
</comment>
<comment type="miscellaneous">
    <text evidence="5">Present with 1470 molecules/cell in log phase SD medium.</text>
</comment>
<comment type="similarity">
    <text evidence="14">Belongs to the AB hydrolase superfamily.</text>
</comment>
<proteinExistence type="evidence at protein level"/>
<accession>P34163</accession>
<accession>D6VX56</accession>
<feature type="chain" id="PRO_0000090379" description="Sterol esterase TGL1">
    <location>
        <begin position="1"/>
        <end position="548"/>
    </location>
</feature>
<feature type="topological domain" description="Lumenal" evidence="7">
    <location>
        <begin position="1"/>
        <end position="13"/>
    </location>
</feature>
<feature type="transmembrane region" description="Helical" evidence="2">
    <location>
        <begin position="14"/>
        <end position="34"/>
    </location>
</feature>
<feature type="topological domain" description="Cytoplasmic" evidence="7">
    <location>
        <begin position="35"/>
        <end position="548"/>
    </location>
</feature>
<feature type="domain" description="AB hydrolase-1" evidence="2">
    <location>
        <begin position="107"/>
        <end position="402"/>
    </location>
</feature>
<feature type="region of interest" description="Disordered" evidence="3">
    <location>
        <begin position="449"/>
        <end position="477"/>
    </location>
</feature>
<feature type="region of interest" description="Disordered" evidence="3">
    <location>
        <begin position="496"/>
        <end position="516"/>
    </location>
</feature>
<feature type="region of interest" description="Disordered" evidence="3">
    <location>
        <begin position="528"/>
        <end position="548"/>
    </location>
</feature>
<feature type="short sequence motif" description="GXSXG" evidence="16">
    <location>
        <begin position="199"/>
        <end position="203"/>
    </location>
</feature>
<feature type="compositionally biased region" description="Basic and acidic residues" evidence="3">
    <location>
        <begin position="502"/>
        <end position="516"/>
    </location>
</feature>
<feature type="active site" description="Nucleophile" evidence="1">
    <location>
        <position position="201"/>
    </location>
</feature>
<feature type="active site" description="Charge relay system" evidence="1">
    <location>
        <position position="369"/>
    </location>
</feature>
<feature type="active site" description="Charge relay system" evidence="1">
    <location>
        <position position="396"/>
    </location>
</feature>
<feature type="modified residue" description="N-acetylmethionine; partial" evidence="15">
    <location>
        <position position="1"/>
    </location>
</feature>
<feature type="modified residue" description="Phosphoserine" evidence="18">
    <location>
        <position position="462"/>
    </location>
</feature>
<feature type="modified residue" description="Phosphoserine" evidence="18">
    <location>
        <position position="466"/>
    </location>
</feature>
<feature type="modified residue" description="Phosphoserine" evidence="17">
    <location>
        <position position="521"/>
    </location>
</feature>
<feature type="modified residue" description="Phosphoserine" evidence="18">
    <location>
        <position position="538"/>
    </location>
</feature>
<feature type="modified residue" description="Phosphothreonine" evidence="18">
    <location>
        <position position="539"/>
    </location>
</feature>
<feature type="cross-link" description="Glycyl lysine isopeptide (Lys-Gly) (interchain with G-Cter in ubiquitin)" evidence="19">
    <location>
        <position position="246"/>
    </location>
</feature>
<protein>
    <recommendedName>
        <fullName>Sterol esterase TGL1</fullName>
        <ecNumber evidence="7">3.1.1.13</ecNumber>
    </recommendedName>
    <alternativeName>
        <fullName>Triglyceride lipase-cholesterol esterase 1</fullName>
    </alternativeName>
</protein>
<evidence type="ECO:0000250" key="1">
    <source>
        <dbReference type="UniProtKB" id="P80035"/>
    </source>
</evidence>
<evidence type="ECO:0000255" key="2"/>
<evidence type="ECO:0000256" key="3">
    <source>
        <dbReference type="SAM" id="MobiDB-lite"/>
    </source>
</evidence>
<evidence type="ECO:0000269" key="4">
    <source>
    </source>
</evidence>
<evidence type="ECO:0000269" key="5">
    <source>
    </source>
</evidence>
<evidence type="ECO:0000269" key="6">
    <source>
    </source>
</evidence>
<evidence type="ECO:0000269" key="7">
    <source>
    </source>
</evidence>
<evidence type="ECO:0000269" key="8">
    <source>
    </source>
</evidence>
<evidence type="ECO:0000269" key="9">
    <source>
    </source>
</evidence>
<evidence type="ECO:0000269" key="10">
    <source>
    </source>
</evidence>
<evidence type="ECO:0000269" key="11">
    <source>
    </source>
</evidence>
<evidence type="ECO:0000269" key="12">
    <source>
    </source>
</evidence>
<evidence type="ECO:0000269" key="13">
    <source>
    </source>
</evidence>
<evidence type="ECO:0000305" key="14"/>
<evidence type="ECO:0000305" key="15">
    <source>
    </source>
</evidence>
<evidence type="ECO:0000305" key="16">
    <source ref="16"/>
</evidence>
<evidence type="ECO:0007744" key="17">
    <source>
    </source>
</evidence>
<evidence type="ECO:0007744" key="18">
    <source>
    </source>
</evidence>
<evidence type="ECO:0007744" key="19">
    <source>
    </source>
</evidence>
<sequence>MYFPFLGRLSITDYIIVVLVYIESIISSVLKLIPQPMINLFEWLINFSTSSDDNTIEEKLRSAPTIHEMCAIFDISVEDHLVRTEDNYILTLHRIPPISKNRFNNKVVYLHHGLLMCSDVWCCNIERHKNLPFVLHDLGYDVWMGNNRGNKYSTAHLNKPPKSNKFWDFSIDEFAFFDIPNSIEFILDITKVDKVICIGFSQGSAQMFAAFSLSEKLNRKVSHFIAIAPAMTPKGLHNRIVDTLAKSSPGFMYLFFGRKIVLPSAVIWQRTLHPTLFNLCIDIANKILFNWKSFNILPRQKIASYAKLYSTTSVKSIVHWFQILRSQKFQMFEESDNMLNSLTRPYQIANFPTRTNIKIPILLIYGGIDSLVDIDVMKKNLPFNSVFDVKVDNYEHLDLIWGKDADTLVIAKVLRFIEFFNPGNVSVKTNQLLPSASLVEELPSTTWKTTHPTHGLSYRTHSADRSPLSVQADEADEVHNADNSRFLRRVFSTSAIDEDNENEHQDDTEDQIHKEQQRRLSAYLESSKDLRQLDANSSTTALDALNKE</sequence>